<feature type="chain" id="PRO_0000340404" description="Urease accessory protein UreD">
    <location>
        <begin position="1"/>
        <end position="294"/>
    </location>
</feature>
<feature type="region of interest" description="Disordered" evidence="2">
    <location>
        <begin position="1"/>
        <end position="22"/>
    </location>
</feature>
<dbReference type="EMBL" id="AM286690">
    <property type="protein sequence ID" value="CAL18170.1"/>
    <property type="molecule type" value="Genomic_DNA"/>
</dbReference>
<dbReference type="SMR" id="Q0VKX8"/>
<dbReference type="STRING" id="393595.ABO_2722"/>
<dbReference type="KEGG" id="abo:ABO_2722"/>
<dbReference type="eggNOG" id="COG0829">
    <property type="taxonomic scope" value="Bacteria"/>
</dbReference>
<dbReference type="HOGENOM" id="CLU_056339_0_0_6"/>
<dbReference type="Proteomes" id="UP000008871">
    <property type="component" value="Chromosome"/>
</dbReference>
<dbReference type="GO" id="GO:0005737">
    <property type="term" value="C:cytoplasm"/>
    <property type="evidence" value="ECO:0007669"/>
    <property type="project" value="UniProtKB-SubCell"/>
</dbReference>
<dbReference type="GO" id="GO:0016151">
    <property type="term" value="F:nickel cation binding"/>
    <property type="evidence" value="ECO:0007669"/>
    <property type="project" value="UniProtKB-UniRule"/>
</dbReference>
<dbReference type="HAMAP" id="MF_01384">
    <property type="entry name" value="UreD"/>
    <property type="match status" value="1"/>
</dbReference>
<dbReference type="InterPro" id="IPR002669">
    <property type="entry name" value="UreD"/>
</dbReference>
<dbReference type="PANTHER" id="PTHR33643">
    <property type="entry name" value="UREASE ACCESSORY PROTEIN D"/>
    <property type="match status" value="1"/>
</dbReference>
<dbReference type="PANTHER" id="PTHR33643:SF1">
    <property type="entry name" value="UREASE ACCESSORY PROTEIN D"/>
    <property type="match status" value="1"/>
</dbReference>
<dbReference type="Pfam" id="PF01774">
    <property type="entry name" value="UreD"/>
    <property type="match status" value="1"/>
</dbReference>
<name>URED_ALCBS</name>
<evidence type="ECO:0000255" key="1">
    <source>
        <dbReference type="HAMAP-Rule" id="MF_01384"/>
    </source>
</evidence>
<evidence type="ECO:0000256" key="2">
    <source>
        <dbReference type="SAM" id="MobiDB-lite"/>
    </source>
</evidence>
<keyword id="KW-0143">Chaperone</keyword>
<keyword id="KW-0963">Cytoplasm</keyword>
<keyword id="KW-0996">Nickel insertion</keyword>
<keyword id="KW-1185">Reference proteome</keyword>
<sequence length="294" mass="32673">MSVEKPVAAGRQNSKATGRHKGWQAKLHMQLECAITGRGMKTVMAELHHYGPLRVQRPFYPEQDTAHIYLLHPPGGVVGGDGLDISITASSQAHGLLTTPGATKFYRSAGQTAHVSQTLTVQAGGTLEWFPQENIFFPGARVQMDTRIDLHGDAHFMGWEISCLGRPVNSEVFHEGKIDARFRISRDRKPLLIERLKVDQPSHLNAASGLRNFPMQAIFVATGSNEELLEQARECIEKQATDMPCGLTLIDDILVMRVLGTRCEKIQALMLPVWQLLRQATLNKPAVIPRIWNT</sequence>
<proteinExistence type="inferred from homology"/>
<reference key="1">
    <citation type="journal article" date="2006" name="Nat. Biotechnol.">
        <title>Genome sequence of the ubiquitous hydrocarbon-degrading marine bacterium Alcanivorax borkumensis.</title>
        <authorList>
            <person name="Schneiker S."/>
            <person name="Martins dos Santos V.A.P."/>
            <person name="Bartels D."/>
            <person name="Bekel T."/>
            <person name="Brecht M."/>
            <person name="Buhrmester J."/>
            <person name="Chernikova T.N."/>
            <person name="Denaro R."/>
            <person name="Ferrer M."/>
            <person name="Gertler C."/>
            <person name="Goesmann A."/>
            <person name="Golyshina O.V."/>
            <person name="Kaminski F."/>
            <person name="Khachane A.N."/>
            <person name="Lang S."/>
            <person name="Linke B."/>
            <person name="McHardy A.C."/>
            <person name="Meyer F."/>
            <person name="Nechitaylo T."/>
            <person name="Puehler A."/>
            <person name="Regenhardt D."/>
            <person name="Rupp O."/>
            <person name="Sabirova J.S."/>
            <person name="Selbitschka W."/>
            <person name="Yakimov M.M."/>
            <person name="Timmis K.N."/>
            <person name="Vorhoelter F.-J."/>
            <person name="Weidner S."/>
            <person name="Kaiser O."/>
            <person name="Golyshin P.N."/>
        </authorList>
    </citation>
    <scope>NUCLEOTIDE SEQUENCE [LARGE SCALE GENOMIC DNA]</scope>
    <source>
        <strain>ATCC 700651 / DSM 11573 / NCIMB 13689 / SK2</strain>
    </source>
</reference>
<accession>Q0VKX8</accession>
<organism>
    <name type="scientific">Alcanivorax borkumensis (strain ATCC 700651 / DSM 11573 / NCIMB 13689 / SK2)</name>
    <dbReference type="NCBI Taxonomy" id="393595"/>
    <lineage>
        <taxon>Bacteria</taxon>
        <taxon>Pseudomonadati</taxon>
        <taxon>Pseudomonadota</taxon>
        <taxon>Gammaproteobacteria</taxon>
        <taxon>Oceanospirillales</taxon>
        <taxon>Alcanivoracaceae</taxon>
        <taxon>Alcanivorax</taxon>
    </lineage>
</organism>
<gene>
    <name evidence="1" type="primary">ureD</name>
    <name type="ordered locus">ABO_2722</name>
</gene>
<protein>
    <recommendedName>
        <fullName evidence="1">Urease accessory protein UreD</fullName>
    </recommendedName>
</protein>
<comment type="function">
    <text evidence="1">Required for maturation of urease via the functional incorporation of the urease nickel metallocenter.</text>
</comment>
<comment type="subunit">
    <text evidence="1">UreD, UreF and UreG form a complex that acts as a GTP-hydrolysis-dependent molecular chaperone, activating the urease apoprotein by helping to assemble the nickel containing metallocenter of UreC. The UreE protein probably delivers the nickel.</text>
</comment>
<comment type="subcellular location">
    <subcellularLocation>
        <location evidence="1">Cytoplasm</location>
    </subcellularLocation>
</comment>
<comment type="similarity">
    <text evidence="1">Belongs to the UreD family.</text>
</comment>